<evidence type="ECO:0000255" key="1">
    <source>
        <dbReference type="HAMAP-Rule" id="MF_00558"/>
    </source>
</evidence>
<organism>
    <name type="scientific">Escherichia coli (strain K12 / DH10B)</name>
    <dbReference type="NCBI Taxonomy" id="316385"/>
    <lineage>
        <taxon>Bacteria</taxon>
        <taxon>Pseudomonadati</taxon>
        <taxon>Pseudomonadota</taxon>
        <taxon>Gammaproteobacteria</taxon>
        <taxon>Enterobacterales</taxon>
        <taxon>Enterobacteriaceae</taxon>
        <taxon>Escherichia</taxon>
    </lineage>
</organism>
<keyword id="KW-0067">ATP-binding</keyword>
<keyword id="KW-0436">Ligase</keyword>
<keyword id="KW-0460">Magnesium</keyword>
<keyword id="KW-0479">Metal-binding</keyword>
<keyword id="KW-0547">Nucleotide-binding</keyword>
<keyword id="KW-0816">Tricarboxylic acid cycle</keyword>
<feature type="chain" id="PRO_1000129185" description="Succinate--CoA ligase [ADP-forming] subunit beta">
    <location>
        <begin position="1"/>
        <end position="388"/>
    </location>
</feature>
<feature type="domain" description="ATP-grasp" evidence="1">
    <location>
        <begin position="9"/>
        <end position="244"/>
    </location>
</feature>
<feature type="binding site" evidence="1">
    <location>
        <position position="46"/>
    </location>
    <ligand>
        <name>ATP</name>
        <dbReference type="ChEBI" id="CHEBI:30616"/>
    </ligand>
</feature>
<feature type="binding site" evidence="1">
    <location>
        <begin position="53"/>
        <end position="55"/>
    </location>
    <ligand>
        <name>ATP</name>
        <dbReference type="ChEBI" id="CHEBI:30616"/>
    </ligand>
</feature>
<feature type="binding site" evidence="1">
    <location>
        <position position="99"/>
    </location>
    <ligand>
        <name>ATP</name>
        <dbReference type="ChEBI" id="CHEBI:30616"/>
    </ligand>
</feature>
<feature type="binding site" evidence="1">
    <location>
        <position position="102"/>
    </location>
    <ligand>
        <name>ATP</name>
        <dbReference type="ChEBI" id="CHEBI:30616"/>
    </ligand>
</feature>
<feature type="binding site" evidence="1">
    <location>
        <position position="107"/>
    </location>
    <ligand>
        <name>ATP</name>
        <dbReference type="ChEBI" id="CHEBI:30616"/>
    </ligand>
</feature>
<feature type="binding site" evidence="1">
    <location>
        <position position="199"/>
    </location>
    <ligand>
        <name>Mg(2+)</name>
        <dbReference type="ChEBI" id="CHEBI:18420"/>
    </ligand>
</feature>
<feature type="binding site" evidence="1">
    <location>
        <position position="213"/>
    </location>
    <ligand>
        <name>Mg(2+)</name>
        <dbReference type="ChEBI" id="CHEBI:18420"/>
    </ligand>
</feature>
<feature type="binding site" evidence="1">
    <location>
        <position position="264"/>
    </location>
    <ligand>
        <name>substrate</name>
        <note>ligand shared with subunit alpha</note>
    </ligand>
</feature>
<feature type="binding site" evidence="1">
    <location>
        <begin position="321"/>
        <end position="323"/>
    </location>
    <ligand>
        <name>substrate</name>
        <note>ligand shared with subunit alpha</note>
    </ligand>
</feature>
<protein>
    <recommendedName>
        <fullName evidence="1">Succinate--CoA ligase [ADP-forming] subunit beta</fullName>
        <ecNumber evidence="1">6.2.1.5</ecNumber>
    </recommendedName>
    <alternativeName>
        <fullName evidence="1">Succinyl-CoA synthetase subunit beta</fullName>
        <shortName evidence="1">SCS-beta</shortName>
    </alternativeName>
</protein>
<proteinExistence type="inferred from homology"/>
<dbReference type="EC" id="6.2.1.5" evidence="1"/>
<dbReference type="EMBL" id="CP000948">
    <property type="protein sequence ID" value="ACB01936.1"/>
    <property type="molecule type" value="Genomic_DNA"/>
</dbReference>
<dbReference type="RefSeq" id="WP_001048602.1">
    <property type="nucleotide sequence ID" value="NC_010473.1"/>
</dbReference>
<dbReference type="SMR" id="B1X6Q8"/>
<dbReference type="GeneID" id="93776757"/>
<dbReference type="KEGG" id="ecd:ECDH10B_0794"/>
<dbReference type="HOGENOM" id="CLU_037430_4_0_6"/>
<dbReference type="UniPathway" id="UPA00223">
    <property type="reaction ID" value="UER00999"/>
</dbReference>
<dbReference type="GO" id="GO:0005829">
    <property type="term" value="C:cytosol"/>
    <property type="evidence" value="ECO:0007669"/>
    <property type="project" value="TreeGrafter"/>
</dbReference>
<dbReference type="GO" id="GO:0042709">
    <property type="term" value="C:succinate-CoA ligase complex"/>
    <property type="evidence" value="ECO:0007669"/>
    <property type="project" value="TreeGrafter"/>
</dbReference>
<dbReference type="GO" id="GO:0005524">
    <property type="term" value="F:ATP binding"/>
    <property type="evidence" value="ECO:0007669"/>
    <property type="project" value="UniProtKB-UniRule"/>
</dbReference>
<dbReference type="GO" id="GO:0000287">
    <property type="term" value="F:magnesium ion binding"/>
    <property type="evidence" value="ECO:0007669"/>
    <property type="project" value="UniProtKB-UniRule"/>
</dbReference>
<dbReference type="GO" id="GO:0004775">
    <property type="term" value="F:succinate-CoA ligase (ADP-forming) activity"/>
    <property type="evidence" value="ECO:0007669"/>
    <property type="project" value="UniProtKB-UniRule"/>
</dbReference>
<dbReference type="GO" id="GO:0004776">
    <property type="term" value="F:succinate-CoA ligase (GDP-forming) activity"/>
    <property type="evidence" value="ECO:0007669"/>
    <property type="project" value="RHEA"/>
</dbReference>
<dbReference type="GO" id="GO:0006104">
    <property type="term" value="P:succinyl-CoA metabolic process"/>
    <property type="evidence" value="ECO:0007669"/>
    <property type="project" value="TreeGrafter"/>
</dbReference>
<dbReference type="GO" id="GO:0006099">
    <property type="term" value="P:tricarboxylic acid cycle"/>
    <property type="evidence" value="ECO:0007669"/>
    <property type="project" value="UniProtKB-UniRule"/>
</dbReference>
<dbReference type="FunFam" id="3.30.1490.20:FF:000002">
    <property type="entry name" value="Succinate--CoA ligase [ADP-forming] subunit beta"/>
    <property type="match status" value="1"/>
</dbReference>
<dbReference type="FunFam" id="3.30.470.20:FF:000002">
    <property type="entry name" value="Succinate--CoA ligase [ADP-forming] subunit beta"/>
    <property type="match status" value="1"/>
</dbReference>
<dbReference type="FunFam" id="3.40.50.261:FF:000001">
    <property type="entry name" value="Succinate--CoA ligase [ADP-forming] subunit beta"/>
    <property type="match status" value="1"/>
</dbReference>
<dbReference type="Gene3D" id="3.30.1490.20">
    <property type="entry name" value="ATP-grasp fold, A domain"/>
    <property type="match status" value="1"/>
</dbReference>
<dbReference type="Gene3D" id="3.30.470.20">
    <property type="entry name" value="ATP-grasp fold, B domain"/>
    <property type="match status" value="1"/>
</dbReference>
<dbReference type="Gene3D" id="3.40.50.261">
    <property type="entry name" value="Succinyl-CoA synthetase domains"/>
    <property type="match status" value="1"/>
</dbReference>
<dbReference type="HAMAP" id="MF_00558">
    <property type="entry name" value="Succ_CoA_beta"/>
    <property type="match status" value="1"/>
</dbReference>
<dbReference type="InterPro" id="IPR011761">
    <property type="entry name" value="ATP-grasp"/>
</dbReference>
<dbReference type="InterPro" id="IPR013650">
    <property type="entry name" value="ATP-grasp_succ-CoA_synth-type"/>
</dbReference>
<dbReference type="InterPro" id="IPR013815">
    <property type="entry name" value="ATP_grasp_subdomain_1"/>
</dbReference>
<dbReference type="InterPro" id="IPR017866">
    <property type="entry name" value="Succ-CoA_synthase_bsu_CS"/>
</dbReference>
<dbReference type="InterPro" id="IPR005811">
    <property type="entry name" value="SUCC_ACL_C"/>
</dbReference>
<dbReference type="InterPro" id="IPR005809">
    <property type="entry name" value="Succ_CoA_ligase-like_bsu"/>
</dbReference>
<dbReference type="InterPro" id="IPR016102">
    <property type="entry name" value="Succinyl-CoA_synth-like"/>
</dbReference>
<dbReference type="NCBIfam" id="NF001913">
    <property type="entry name" value="PRK00696.1"/>
    <property type="match status" value="1"/>
</dbReference>
<dbReference type="NCBIfam" id="TIGR01016">
    <property type="entry name" value="sucCoAbeta"/>
    <property type="match status" value="1"/>
</dbReference>
<dbReference type="PANTHER" id="PTHR11815:SF10">
    <property type="entry name" value="SUCCINATE--COA LIGASE [GDP-FORMING] SUBUNIT BETA, MITOCHONDRIAL"/>
    <property type="match status" value="1"/>
</dbReference>
<dbReference type="PANTHER" id="PTHR11815">
    <property type="entry name" value="SUCCINYL-COA SYNTHETASE BETA CHAIN"/>
    <property type="match status" value="1"/>
</dbReference>
<dbReference type="Pfam" id="PF08442">
    <property type="entry name" value="ATP-grasp_2"/>
    <property type="match status" value="1"/>
</dbReference>
<dbReference type="Pfam" id="PF00549">
    <property type="entry name" value="Ligase_CoA"/>
    <property type="match status" value="1"/>
</dbReference>
<dbReference type="PIRSF" id="PIRSF001554">
    <property type="entry name" value="SucCS_beta"/>
    <property type="match status" value="1"/>
</dbReference>
<dbReference type="SUPFAM" id="SSF56059">
    <property type="entry name" value="Glutathione synthetase ATP-binding domain-like"/>
    <property type="match status" value="1"/>
</dbReference>
<dbReference type="SUPFAM" id="SSF52210">
    <property type="entry name" value="Succinyl-CoA synthetase domains"/>
    <property type="match status" value="1"/>
</dbReference>
<dbReference type="PROSITE" id="PS50975">
    <property type="entry name" value="ATP_GRASP"/>
    <property type="match status" value="1"/>
</dbReference>
<dbReference type="PROSITE" id="PS01217">
    <property type="entry name" value="SUCCINYL_COA_LIG_3"/>
    <property type="match status" value="1"/>
</dbReference>
<gene>
    <name evidence="1" type="primary">sucC</name>
    <name type="ordered locus">ECDH10B_0794</name>
</gene>
<reference key="1">
    <citation type="journal article" date="2008" name="J. Bacteriol.">
        <title>The complete genome sequence of Escherichia coli DH10B: insights into the biology of a laboratory workhorse.</title>
        <authorList>
            <person name="Durfee T."/>
            <person name="Nelson R."/>
            <person name="Baldwin S."/>
            <person name="Plunkett G. III"/>
            <person name="Burland V."/>
            <person name="Mau B."/>
            <person name="Petrosino J.F."/>
            <person name="Qin X."/>
            <person name="Muzny D.M."/>
            <person name="Ayele M."/>
            <person name="Gibbs R.A."/>
            <person name="Csorgo B."/>
            <person name="Posfai G."/>
            <person name="Weinstock G.M."/>
            <person name="Blattner F.R."/>
        </authorList>
    </citation>
    <scope>NUCLEOTIDE SEQUENCE [LARGE SCALE GENOMIC DNA]</scope>
    <source>
        <strain>K12 / DH10B</strain>
    </source>
</reference>
<accession>B1X6Q8</accession>
<comment type="function">
    <text evidence="1">Succinyl-CoA synthetase functions in the citric acid cycle (TCA), coupling the hydrolysis of succinyl-CoA to the synthesis of either ATP or GTP and thus represents the only step of substrate-level phosphorylation in the TCA. The beta subunit provides nucleotide specificity of the enzyme and binds the substrate succinate, while the binding sites for coenzyme A and phosphate are found in the alpha subunit.</text>
</comment>
<comment type="catalytic activity">
    <reaction evidence="1">
        <text>succinate + ATP + CoA = succinyl-CoA + ADP + phosphate</text>
        <dbReference type="Rhea" id="RHEA:17661"/>
        <dbReference type="ChEBI" id="CHEBI:30031"/>
        <dbReference type="ChEBI" id="CHEBI:30616"/>
        <dbReference type="ChEBI" id="CHEBI:43474"/>
        <dbReference type="ChEBI" id="CHEBI:57287"/>
        <dbReference type="ChEBI" id="CHEBI:57292"/>
        <dbReference type="ChEBI" id="CHEBI:456216"/>
        <dbReference type="EC" id="6.2.1.5"/>
    </reaction>
    <physiologicalReaction direction="right-to-left" evidence="1">
        <dbReference type="Rhea" id="RHEA:17663"/>
    </physiologicalReaction>
</comment>
<comment type="catalytic activity">
    <reaction evidence="1">
        <text>GTP + succinate + CoA = succinyl-CoA + GDP + phosphate</text>
        <dbReference type="Rhea" id="RHEA:22120"/>
        <dbReference type="ChEBI" id="CHEBI:30031"/>
        <dbReference type="ChEBI" id="CHEBI:37565"/>
        <dbReference type="ChEBI" id="CHEBI:43474"/>
        <dbReference type="ChEBI" id="CHEBI:57287"/>
        <dbReference type="ChEBI" id="CHEBI:57292"/>
        <dbReference type="ChEBI" id="CHEBI:58189"/>
    </reaction>
    <physiologicalReaction direction="right-to-left" evidence="1">
        <dbReference type="Rhea" id="RHEA:22122"/>
    </physiologicalReaction>
</comment>
<comment type="cofactor">
    <cofactor evidence="1">
        <name>Mg(2+)</name>
        <dbReference type="ChEBI" id="CHEBI:18420"/>
    </cofactor>
    <text evidence="1">Binds 1 Mg(2+) ion per subunit.</text>
</comment>
<comment type="pathway">
    <text evidence="1">Carbohydrate metabolism; tricarboxylic acid cycle; succinate from succinyl-CoA (ligase route): step 1/1.</text>
</comment>
<comment type="subunit">
    <text evidence="1">Heterotetramer of two alpha and two beta subunits.</text>
</comment>
<comment type="similarity">
    <text evidence="1">Belongs to the succinate/malate CoA ligase beta subunit family.</text>
</comment>
<sequence length="388" mass="41393">MNLHEYQAKQLFARYGLPAPVGYACTTPREAEEAASKIGAGPWVVKCQVHAGGRGKAGGVKVVNSKEDIRAFAENWLGKRLVTYQTDANGQPVNQILVEAATDIAKELYLGAVVDRSSRRVVFMASTEGGVEIEKVAEETPHLIHKVALDPLTGPMPYQGRELAFKLGLEGKLVQQFTKIFMGLATIFLERDLALIEINPLVITKQGDLICLDGKLGADGNALFRQPDLREMRDQSQEDPREAQAAQWELNYVALDGNIGCMVNGAGLAMGTMDIVKLHGGEPANFLDVGGGATKERVTEAFKIILSDDKVKAVLVNIFGGIVRCDLIADGIIGAVAEVGVNVPVVVRLEGNNAELGAKKLADSGLNIIAAKGLTDAAQQVVAAVEGK</sequence>
<name>SUCC_ECODH</name>